<proteinExistence type="inferred from homology"/>
<reference key="1">
    <citation type="journal article" date="1998" name="Virus Genes">
        <title>Nucleotide and predicted amino acid sequences of all genes encoded by the 3' genomic portion (9.5 kb) of respiratory bovine coronaviruses and comparisons among respiratory and enteric coronaviruses.</title>
        <authorList>
            <person name="Chouljenko V.N."/>
            <person name="Kousoulas K.G."/>
            <person name="Lin X.Q."/>
            <person name="Storz J."/>
        </authorList>
    </citation>
    <scope>NUCLEOTIDE SEQUENCE [GENOMIC RNA]</scope>
    <source>
        <strain>Isolate OK-0514-3</strain>
    </source>
</reference>
<feature type="chain" id="PRO_0000106026" description="Membrane protein">
    <location>
        <begin position="1"/>
        <end position="230"/>
    </location>
</feature>
<feature type="topological domain" description="Virion surface" evidence="1">
    <location>
        <begin position="1"/>
        <end position="24"/>
    </location>
</feature>
<feature type="transmembrane region" description="Helical" evidence="1">
    <location>
        <begin position="25"/>
        <end position="45"/>
    </location>
</feature>
<feature type="topological domain" description="Intravirion" evidence="1">
    <location>
        <begin position="46"/>
        <end position="55"/>
    </location>
</feature>
<feature type="transmembrane region" description="Helical" evidence="1">
    <location>
        <begin position="56"/>
        <end position="76"/>
    </location>
</feature>
<feature type="topological domain" description="Virion surface" evidence="1">
    <location>
        <begin position="77"/>
        <end position="84"/>
    </location>
</feature>
<feature type="transmembrane region" description="Helical" evidence="1">
    <location>
        <begin position="85"/>
        <end position="105"/>
    </location>
</feature>
<feature type="topological domain" description="Intravirion" evidence="1">
    <location>
        <begin position="106"/>
        <end position="228"/>
    </location>
</feature>
<name>VME1_CVBOK</name>
<evidence type="ECO:0000255" key="1">
    <source>
        <dbReference type="HAMAP-Rule" id="MF_04202"/>
    </source>
</evidence>
<evidence type="ECO:0000255" key="2">
    <source>
        <dbReference type="PROSITE-ProRule" id="PRU01275"/>
    </source>
</evidence>
<organism>
    <name type="scientific">Bovine coronavirus (strain OK-0514)</name>
    <name type="common">BCoV</name>
    <name type="synonym">BCV</name>
    <dbReference type="NCBI Taxonomy" id="231432"/>
    <lineage>
        <taxon>Viruses</taxon>
        <taxon>Riboviria</taxon>
        <taxon>Orthornavirae</taxon>
        <taxon>Pisuviricota</taxon>
        <taxon>Pisoniviricetes</taxon>
        <taxon>Nidovirales</taxon>
        <taxon>Cornidovirineae</taxon>
        <taxon>Coronaviridae</taxon>
        <taxon>Orthocoronavirinae</taxon>
        <taxon>Betacoronavirus</taxon>
        <taxon>Embecovirus</taxon>
        <taxon>Betacoronavirus 1</taxon>
    </lineage>
</organism>
<comment type="function">
    <text evidence="1 2">Component of the viral envelope that plays a central role in virus morphogenesis and assembly via its interactions with other viral proteins.</text>
</comment>
<comment type="subunit">
    <text evidence="1 2">Homomultimer. Interacts with envelope E protein in the budding compartment of the host cell, which is located between endoplasmic reticulum and the Golgi complex. Forms a complex with HE and S proteins. Interacts with nucleocapsid N protein. This interaction probably participates in RNA packaging into the virus.</text>
</comment>
<comment type="subcellular location">
    <subcellularLocation>
        <location evidence="1">Virion membrane</location>
        <topology evidence="1">Multi-pass membrane protein</topology>
    </subcellularLocation>
    <subcellularLocation>
        <location evidence="1">Host Golgi apparatus membrane</location>
        <topology evidence="1">Multi-pass membrane protein</topology>
    </subcellularLocation>
    <text evidence="1">Largely embedded in the lipid bilayer.</text>
</comment>
<comment type="similarity">
    <text evidence="1">Belongs to the betacoronaviruses M protein family.</text>
</comment>
<organismHost>
    <name type="scientific">Bos taurus</name>
    <name type="common">Bovine</name>
    <dbReference type="NCBI Taxonomy" id="9913"/>
</organismHost>
<protein>
    <recommendedName>
        <fullName evidence="1">Membrane protein</fullName>
        <shortName evidence="1">M protein</shortName>
    </recommendedName>
    <alternativeName>
        <fullName evidence="1">E1 glycoprotein</fullName>
    </alternativeName>
    <alternativeName>
        <fullName evidence="1">Matrix glycoprotein</fullName>
    </alternativeName>
    <alternativeName>
        <fullName evidence="1">Membrane glycoprotein</fullName>
    </alternativeName>
</protein>
<gene>
    <name evidence="1" type="primary">M</name>
    <name type="ORF">6</name>
</gene>
<accession>P69600</accession>
<accession>Q9PWZ0</accession>
<sequence length="230" mass="26358">MSSVTTPAPVYTWTADEAIKFLKEWNFSLGIILLFITVILQFGYTSRSMFVYVIKMIILWLMWPLTIILTIFNCVYALNNVYLGFSIVFTIVAIIMWIVYFVNSIRLFIRTGSWWSFNPETNNLMCIDMKGRMYVRPIIEDYHTLTVTIIRGHLYMQGIKLGTGYSLSDLPAYVTVAKVSHLLTYKRGFLDKIGDTSGFAVYVKSKVGNYRLPSTQKGSGMDTALLRNNI</sequence>
<keyword id="KW-0325">Glycoprotein</keyword>
<keyword id="KW-1040">Host Golgi apparatus</keyword>
<keyword id="KW-1043">Host membrane</keyword>
<keyword id="KW-0945">Host-virus interaction</keyword>
<keyword id="KW-0472">Membrane</keyword>
<keyword id="KW-0812">Transmembrane</keyword>
<keyword id="KW-1133">Transmembrane helix</keyword>
<keyword id="KW-0261">Viral envelope protein</keyword>
<keyword id="KW-0899">Viral immunoevasion</keyword>
<keyword id="KW-0468">Viral matrix protein</keyword>
<keyword id="KW-0946">Virion</keyword>
<dbReference type="EMBL" id="AF058944">
    <property type="protein sequence ID" value="AAF25524.1"/>
    <property type="molecule type" value="Genomic_RNA"/>
</dbReference>
<dbReference type="SMR" id="P69600"/>
<dbReference type="GO" id="GO:0044178">
    <property type="term" value="C:host cell Golgi membrane"/>
    <property type="evidence" value="ECO:0007669"/>
    <property type="project" value="UniProtKB-SubCell"/>
</dbReference>
<dbReference type="GO" id="GO:0016020">
    <property type="term" value="C:membrane"/>
    <property type="evidence" value="ECO:0007669"/>
    <property type="project" value="UniProtKB-UniRule"/>
</dbReference>
<dbReference type="GO" id="GO:0019031">
    <property type="term" value="C:viral envelope"/>
    <property type="evidence" value="ECO:0007669"/>
    <property type="project" value="UniProtKB-UniRule"/>
</dbReference>
<dbReference type="GO" id="GO:0055036">
    <property type="term" value="C:virion membrane"/>
    <property type="evidence" value="ECO:0007669"/>
    <property type="project" value="UniProtKB-SubCell"/>
</dbReference>
<dbReference type="GO" id="GO:0039660">
    <property type="term" value="F:structural constituent of virion"/>
    <property type="evidence" value="ECO:0007669"/>
    <property type="project" value="UniProtKB-UniRule"/>
</dbReference>
<dbReference type="CDD" id="cd21568">
    <property type="entry name" value="HCoV-like_M"/>
    <property type="match status" value="1"/>
</dbReference>
<dbReference type="HAMAP" id="MF_04202">
    <property type="entry name" value="BETA_CORONA_M"/>
    <property type="match status" value="1"/>
</dbReference>
<dbReference type="InterPro" id="IPR002574">
    <property type="entry name" value="M_CoV"/>
</dbReference>
<dbReference type="InterPro" id="IPR044362">
    <property type="entry name" value="M_HCoV-like"/>
</dbReference>
<dbReference type="Pfam" id="PF01635">
    <property type="entry name" value="CoV_M"/>
    <property type="match status" value="1"/>
</dbReference>
<dbReference type="PROSITE" id="PS51927">
    <property type="entry name" value="COV_M"/>
    <property type="match status" value="1"/>
</dbReference>